<sequence>MTVLVALFCLVTWTLCTRIPQYSTQGTQQPQQPEKTPHPHPQPEDAFPPTHATDLKIHDPSIIHVDGTYYSYSVGRHIRIHQAPSLDGPWERTGAVLNADSVIPKGDRKAPWAPQTVHHNDTYYCFYAVSNSGCRDSAIGVATSKSPGPGGWTDHGLLVQSGTGKGSDEHPFTSSNTIDPSVFVGEDGHGYLMFGSFWSGIWQVPLDESLLSVAGDTSSEARQLVYMEKAPLPASKHPNPLCREPSGARPIEGSFLSYHEPWYYLWFSYGKCCKFDTKNLPPPGREYSIRVGRSKSPRGPFVDKQGRDLANGGGEIVYASNRDVYAPGGQGVLTEKSGDILYYHYCRYPVIQEIEVDADLTVNKSTSYDFWV</sequence>
<accession>B0XTS5</accession>
<dbReference type="EC" id="3.2.1.99"/>
<dbReference type="EMBL" id="DS499595">
    <property type="protein sequence ID" value="EDP54917.1"/>
    <property type="status" value="ALT_INIT"/>
    <property type="molecule type" value="Genomic_DNA"/>
</dbReference>
<dbReference type="SMR" id="B0XTS5"/>
<dbReference type="GlyCosmos" id="B0XTS5">
    <property type="glycosylation" value="2 sites, No reported glycans"/>
</dbReference>
<dbReference type="OrthoDB" id="32219at5052"/>
<dbReference type="PhylomeDB" id="B0XTS5"/>
<dbReference type="UniPathway" id="UPA00667"/>
<dbReference type="Proteomes" id="UP000001699">
    <property type="component" value="Unassembled WGS sequence"/>
</dbReference>
<dbReference type="GO" id="GO:0005576">
    <property type="term" value="C:extracellular region"/>
    <property type="evidence" value="ECO:0007669"/>
    <property type="project" value="UniProtKB-SubCell"/>
</dbReference>
<dbReference type="GO" id="GO:0046558">
    <property type="term" value="F:arabinan endo-1,5-alpha-L-arabinosidase activity"/>
    <property type="evidence" value="ECO:0007669"/>
    <property type="project" value="UniProtKB-EC"/>
</dbReference>
<dbReference type="GO" id="GO:0031222">
    <property type="term" value="P:arabinan catabolic process"/>
    <property type="evidence" value="ECO:0007669"/>
    <property type="project" value="UniProtKB-UniPathway"/>
</dbReference>
<dbReference type="GO" id="GO:0045493">
    <property type="term" value="P:xylan catabolic process"/>
    <property type="evidence" value="ECO:0007669"/>
    <property type="project" value="UniProtKB-KW"/>
</dbReference>
<dbReference type="CDD" id="cd18831">
    <property type="entry name" value="GH43_AnAbnA-like"/>
    <property type="match status" value="1"/>
</dbReference>
<dbReference type="Gene3D" id="2.115.10.20">
    <property type="entry name" value="Glycosyl hydrolase domain, family 43"/>
    <property type="match status" value="1"/>
</dbReference>
<dbReference type="InterPro" id="IPR050727">
    <property type="entry name" value="GH43_arabinanases"/>
</dbReference>
<dbReference type="InterPro" id="IPR006710">
    <property type="entry name" value="Glyco_hydro_43"/>
</dbReference>
<dbReference type="InterPro" id="IPR016840">
    <property type="entry name" value="Glyco_hydro_43_endo_a_Ara-ase"/>
</dbReference>
<dbReference type="InterPro" id="IPR023296">
    <property type="entry name" value="Glyco_hydro_beta-prop_sf"/>
</dbReference>
<dbReference type="PANTHER" id="PTHR43301">
    <property type="entry name" value="ARABINAN ENDO-1,5-ALPHA-L-ARABINOSIDASE"/>
    <property type="match status" value="1"/>
</dbReference>
<dbReference type="PANTHER" id="PTHR43301:SF4">
    <property type="entry name" value="ARABINAN ENDO-1,5-ALPHA-L-ARABINOSIDASE B"/>
    <property type="match status" value="1"/>
</dbReference>
<dbReference type="Pfam" id="PF04616">
    <property type="entry name" value="Glyco_hydro_43"/>
    <property type="match status" value="1"/>
</dbReference>
<dbReference type="PIRSF" id="PIRSF026534">
    <property type="entry name" value="Endo_alpha-L-arabinosidase"/>
    <property type="match status" value="1"/>
</dbReference>
<dbReference type="SUPFAM" id="SSF75005">
    <property type="entry name" value="Arabinanase/levansucrase/invertase"/>
    <property type="match status" value="1"/>
</dbReference>
<evidence type="ECO:0000250" key="1"/>
<evidence type="ECO:0000250" key="2">
    <source>
        <dbReference type="UniProtKB" id="P94522"/>
    </source>
</evidence>
<evidence type="ECO:0000255" key="3"/>
<evidence type="ECO:0000256" key="4">
    <source>
        <dbReference type="SAM" id="MobiDB-lite"/>
    </source>
</evidence>
<evidence type="ECO:0000305" key="5"/>
<comment type="function">
    <text evidence="1">Endo-1,5-alpha-L-arabinanase involved in degradation of pectin. Its preferred substrate is linear 1,5-alpha-L-arabinan (By similarity).</text>
</comment>
<comment type="catalytic activity">
    <reaction>
        <text>Endohydrolysis of (1-&gt;5)-alpha-arabinofuranosidic linkages in (1-&gt;5)-arabinans.</text>
        <dbReference type="EC" id="3.2.1.99"/>
    </reaction>
</comment>
<comment type="pathway">
    <text>Glycan metabolism; L-arabinan degradation.</text>
</comment>
<comment type="subcellular location">
    <subcellularLocation>
        <location evidence="1">Secreted</location>
    </subcellularLocation>
</comment>
<comment type="similarity">
    <text evidence="5">Belongs to the glycosyl hydrolase 43 family.</text>
</comment>
<comment type="sequence caution" evidence="5">
    <conflict type="erroneous initiation">
        <sequence resource="EMBL-CDS" id="EDP54917"/>
    </conflict>
    <text>Extended N-terminus.</text>
</comment>
<gene>
    <name type="primary">abnB</name>
    <name type="ORF">AFUB_029770</name>
</gene>
<organism>
    <name type="scientific">Aspergillus fumigatus (strain CBS 144.89 / FGSC A1163 / CEA10)</name>
    <name type="common">Neosartorya fumigata</name>
    <dbReference type="NCBI Taxonomy" id="451804"/>
    <lineage>
        <taxon>Eukaryota</taxon>
        <taxon>Fungi</taxon>
        <taxon>Dikarya</taxon>
        <taxon>Ascomycota</taxon>
        <taxon>Pezizomycotina</taxon>
        <taxon>Eurotiomycetes</taxon>
        <taxon>Eurotiomycetidae</taxon>
        <taxon>Eurotiales</taxon>
        <taxon>Aspergillaceae</taxon>
        <taxon>Aspergillus</taxon>
        <taxon>Aspergillus subgen. Fumigati</taxon>
    </lineage>
</organism>
<protein>
    <recommendedName>
        <fullName>Probable arabinan endo-1,5-alpha-L-arabinosidase B</fullName>
        <ecNumber>3.2.1.99</ecNumber>
    </recommendedName>
    <alternativeName>
        <fullName>Endo-1,5-alpha-L-arabinanase B</fullName>
        <shortName>ABN B</shortName>
    </alternativeName>
</protein>
<name>ABNB_ASPFC</name>
<feature type="signal peptide" evidence="3">
    <location>
        <begin position="1"/>
        <end position="16"/>
    </location>
</feature>
<feature type="chain" id="PRO_0000394625" description="Probable arabinan endo-1,5-alpha-L-arabinosidase B">
    <location>
        <begin position="17"/>
        <end position="372"/>
    </location>
</feature>
<feature type="region of interest" description="Disordered" evidence="4">
    <location>
        <begin position="23"/>
        <end position="52"/>
    </location>
</feature>
<feature type="compositionally biased region" description="Low complexity" evidence="4">
    <location>
        <begin position="23"/>
        <end position="34"/>
    </location>
</feature>
<feature type="active site" description="Proton acceptor" evidence="2">
    <location>
        <position position="59"/>
    </location>
</feature>
<feature type="active site" description="Proton donor" evidence="2">
    <location>
        <position position="252"/>
    </location>
</feature>
<feature type="site" description="Important for catalytic activity, responsible for pKa modulation of the active site Glu and correct orientation of both the proton donor and substrate" evidence="2">
    <location>
        <position position="179"/>
    </location>
</feature>
<feature type="glycosylation site" description="N-linked (GlcNAc...) asparagine" evidence="3">
    <location>
        <position position="120"/>
    </location>
</feature>
<feature type="glycosylation site" description="N-linked (GlcNAc...) asparagine" evidence="3">
    <location>
        <position position="363"/>
    </location>
</feature>
<keyword id="KW-0119">Carbohydrate metabolism</keyword>
<keyword id="KW-0325">Glycoprotein</keyword>
<keyword id="KW-0326">Glycosidase</keyword>
<keyword id="KW-0378">Hydrolase</keyword>
<keyword id="KW-0624">Polysaccharide degradation</keyword>
<keyword id="KW-0964">Secreted</keyword>
<keyword id="KW-0732">Signal</keyword>
<keyword id="KW-0858">Xylan degradation</keyword>
<proteinExistence type="inferred from homology"/>
<reference key="1">
    <citation type="journal article" date="2008" name="PLoS Genet.">
        <title>Genomic islands in the pathogenic filamentous fungus Aspergillus fumigatus.</title>
        <authorList>
            <person name="Fedorova N.D."/>
            <person name="Khaldi N."/>
            <person name="Joardar V.S."/>
            <person name="Maiti R."/>
            <person name="Amedeo P."/>
            <person name="Anderson M.J."/>
            <person name="Crabtree J."/>
            <person name="Silva J.C."/>
            <person name="Badger J.H."/>
            <person name="Albarraq A."/>
            <person name="Angiuoli S."/>
            <person name="Bussey H."/>
            <person name="Bowyer P."/>
            <person name="Cotty P.J."/>
            <person name="Dyer P.S."/>
            <person name="Egan A."/>
            <person name="Galens K."/>
            <person name="Fraser-Liggett C.M."/>
            <person name="Haas B.J."/>
            <person name="Inman J.M."/>
            <person name="Kent R."/>
            <person name="Lemieux S."/>
            <person name="Malavazi I."/>
            <person name="Orvis J."/>
            <person name="Roemer T."/>
            <person name="Ronning C.M."/>
            <person name="Sundaram J.P."/>
            <person name="Sutton G."/>
            <person name="Turner G."/>
            <person name="Venter J.C."/>
            <person name="White O.R."/>
            <person name="Whitty B.R."/>
            <person name="Youngman P."/>
            <person name="Wolfe K.H."/>
            <person name="Goldman G.H."/>
            <person name="Wortman J.R."/>
            <person name="Jiang B."/>
            <person name="Denning D.W."/>
            <person name="Nierman W.C."/>
        </authorList>
    </citation>
    <scope>NUCLEOTIDE SEQUENCE [LARGE SCALE GENOMIC DNA]</scope>
    <source>
        <strain>CBS 144.89 / FGSC A1163 / CEA10</strain>
    </source>
</reference>